<accession>Q8D922</accession>
<comment type="function">
    <text evidence="1">Joins adenosylcobinamide-GDP and alpha-ribazole to generate adenosylcobalamin (Ado-cobalamin). Also synthesizes adenosylcobalamin 5'-phosphate from adenosylcobinamide-GDP and alpha-ribazole 5'-phosphate.</text>
</comment>
<comment type="catalytic activity">
    <reaction evidence="1">
        <text>alpha-ribazole + adenosylcob(III)inamide-GDP = adenosylcob(III)alamin + GMP + H(+)</text>
        <dbReference type="Rhea" id="RHEA:16049"/>
        <dbReference type="ChEBI" id="CHEBI:10329"/>
        <dbReference type="ChEBI" id="CHEBI:15378"/>
        <dbReference type="ChEBI" id="CHEBI:18408"/>
        <dbReference type="ChEBI" id="CHEBI:58115"/>
        <dbReference type="ChEBI" id="CHEBI:60487"/>
        <dbReference type="EC" id="2.7.8.26"/>
    </reaction>
</comment>
<comment type="catalytic activity">
    <reaction evidence="1">
        <text>alpha-ribazole 5'-phosphate + adenosylcob(III)inamide-GDP = adenosylcob(III)alamin 5'-phosphate + GMP + H(+)</text>
        <dbReference type="Rhea" id="RHEA:23560"/>
        <dbReference type="ChEBI" id="CHEBI:15378"/>
        <dbReference type="ChEBI" id="CHEBI:57918"/>
        <dbReference type="ChEBI" id="CHEBI:58115"/>
        <dbReference type="ChEBI" id="CHEBI:60487"/>
        <dbReference type="ChEBI" id="CHEBI:60493"/>
        <dbReference type="EC" id="2.7.8.26"/>
    </reaction>
</comment>
<comment type="cofactor">
    <cofactor evidence="1">
        <name>Mg(2+)</name>
        <dbReference type="ChEBI" id="CHEBI:18420"/>
    </cofactor>
</comment>
<comment type="pathway">
    <text evidence="1">Cofactor biosynthesis; adenosylcobalamin biosynthesis; adenosylcobalamin from cob(II)yrinate a,c-diamide: step 7/7.</text>
</comment>
<comment type="subcellular location">
    <subcellularLocation>
        <location evidence="1">Cell inner membrane</location>
        <topology evidence="1">Multi-pass membrane protein</topology>
    </subcellularLocation>
</comment>
<comment type="similarity">
    <text evidence="1">Belongs to the CobS family.</text>
</comment>
<organism>
    <name type="scientific">Vibrio vulnificus (strain CMCP6)</name>
    <dbReference type="NCBI Taxonomy" id="216895"/>
    <lineage>
        <taxon>Bacteria</taxon>
        <taxon>Pseudomonadati</taxon>
        <taxon>Pseudomonadota</taxon>
        <taxon>Gammaproteobacteria</taxon>
        <taxon>Vibrionales</taxon>
        <taxon>Vibrionaceae</taxon>
        <taxon>Vibrio</taxon>
    </lineage>
</organism>
<sequence length="255" mass="27797">MKTWQYQYQLFCLAVSFFSRLPVPKSTPYSDERMNQAGRYFALVGTLLGLLCVLVYAFASLFFPYQVAIVLMMAFSLLLTGAFHEDGLTDMADGIGGGMTLDKRLTIMKDSRIGTYGSATLTMALIGKFVFLTTLARQPDFGLMIVVAYTLSRAVAATLIYDMPYVSDSDTSKSKPLANAQSSTELAILILTGVLAAISLGLGVGLLLILFAILFRWAFKRWLLARLGGFTGDCLGGAQQLMELGIYLVLIAVVQ</sequence>
<dbReference type="EC" id="2.7.8.26" evidence="1"/>
<dbReference type="EMBL" id="AE016795">
    <property type="protein sequence ID" value="AAO11129.1"/>
    <property type="molecule type" value="Genomic_DNA"/>
</dbReference>
<dbReference type="RefSeq" id="WP_011080623.1">
    <property type="nucleotide sequence ID" value="NC_004459.3"/>
</dbReference>
<dbReference type="KEGG" id="vvu:VV1_2787"/>
<dbReference type="HOGENOM" id="CLU_057426_1_1_6"/>
<dbReference type="UniPathway" id="UPA00148">
    <property type="reaction ID" value="UER00238"/>
</dbReference>
<dbReference type="Proteomes" id="UP000002275">
    <property type="component" value="Chromosome 1"/>
</dbReference>
<dbReference type="GO" id="GO:0005886">
    <property type="term" value="C:plasma membrane"/>
    <property type="evidence" value="ECO:0007669"/>
    <property type="project" value="UniProtKB-SubCell"/>
</dbReference>
<dbReference type="GO" id="GO:0051073">
    <property type="term" value="F:adenosylcobinamide-GDP ribazoletransferase activity"/>
    <property type="evidence" value="ECO:0007669"/>
    <property type="project" value="UniProtKB-UniRule"/>
</dbReference>
<dbReference type="GO" id="GO:0008818">
    <property type="term" value="F:cobalamin 5'-phosphate synthase activity"/>
    <property type="evidence" value="ECO:0007669"/>
    <property type="project" value="UniProtKB-UniRule"/>
</dbReference>
<dbReference type="GO" id="GO:0009236">
    <property type="term" value="P:cobalamin biosynthetic process"/>
    <property type="evidence" value="ECO:0007669"/>
    <property type="project" value="UniProtKB-UniRule"/>
</dbReference>
<dbReference type="HAMAP" id="MF_00719">
    <property type="entry name" value="CobS"/>
    <property type="match status" value="1"/>
</dbReference>
<dbReference type="InterPro" id="IPR003805">
    <property type="entry name" value="CobS"/>
</dbReference>
<dbReference type="NCBIfam" id="NF001277">
    <property type="entry name" value="PRK00235.1-3"/>
    <property type="match status" value="1"/>
</dbReference>
<dbReference type="PANTHER" id="PTHR34148">
    <property type="entry name" value="ADENOSYLCOBINAMIDE-GDP RIBAZOLETRANSFERASE"/>
    <property type="match status" value="1"/>
</dbReference>
<dbReference type="PANTHER" id="PTHR34148:SF1">
    <property type="entry name" value="ADENOSYLCOBINAMIDE-GDP RIBAZOLETRANSFERASE"/>
    <property type="match status" value="1"/>
</dbReference>
<dbReference type="Pfam" id="PF02654">
    <property type="entry name" value="CobS"/>
    <property type="match status" value="1"/>
</dbReference>
<proteinExistence type="inferred from homology"/>
<name>COBS_VIBVU</name>
<reference key="1">
    <citation type="submission" date="2002-12" db="EMBL/GenBank/DDBJ databases">
        <title>Complete genome sequence of Vibrio vulnificus CMCP6.</title>
        <authorList>
            <person name="Rhee J.H."/>
            <person name="Kim S.Y."/>
            <person name="Chung S.S."/>
            <person name="Kim J.J."/>
            <person name="Moon Y.H."/>
            <person name="Jeong H."/>
            <person name="Choy H.E."/>
        </authorList>
    </citation>
    <scope>NUCLEOTIDE SEQUENCE [LARGE SCALE GENOMIC DNA]</scope>
    <source>
        <strain>CMCP6</strain>
    </source>
</reference>
<evidence type="ECO:0000255" key="1">
    <source>
        <dbReference type="HAMAP-Rule" id="MF_00719"/>
    </source>
</evidence>
<gene>
    <name evidence="1" type="primary">cobS</name>
    <name type="ordered locus">VV1_2787</name>
</gene>
<keyword id="KW-0997">Cell inner membrane</keyword>
<keyword id="KW-1003">Cell membrane</keyword>
<keyword id="KW-0169">Cobalamin biosynthesis</keyword>
<keyword id="KW-0460">Magnesium</keyword>
<keyword id="KW-0472">Membrane</keyword>
<keyword id="KW-0808">Transferase</keyword>
<keyword id="KW-0812">Transmembrane</keyword>
<keyword id="KW-1133">Transmembrane helix</keyword>
<protein>
    <recommendedName>
        <fullName evidence="1">Adenosylcobinamide-GDP ribazoletransferase</fullName>
        <ecNumber evidence="1">2.7.8.26</ecNumber>
    </recommendedName>
    <alternativeName>
        <fullName evidence="1">Cobalamin synthase</fullName>
    </alternativeName>
    <alternativeName>
        <fullName evidence="1">Cobalamin-5'-phosphate synthase</fullName>
    </alternativeName>
</protein>
<feature type="chain" id="PRO_0000146904" description="Adenosylcobinamide-GDP ribazoletransferase">
    <location>
        <begin position="1"/>
        <end position="255"/>
    </location>
</feature>
<feature type="transmembrane region" description="Helical" evidence="1">
    <location>
        <begin position="43"/>
        <end position="63"/>
    </location>
</feature>
<feature type="transmembrane region" description="Helical" evidence="1">
    <location>
        <begin position="64"/>
        <end position="84"/>
    </location>
</feature>
<feature type="transmembrane region" description="Helical" evidence="1">
    <location>
        <begin position="113"/>
        <end position="133"/>
    </location>
</feature>
<feature type="transmembrane region" description="Helical" evidence="1">
    <location>
        <begin position="141"/>
        <end position="161"/>
    </location>
</feature>
<feature type="transmembrane region" description="Helical" evidence="1">
    <location>
        <begin position="195"/>
        <end position="215"/>
    </location>
</feature>
<feature type="transmembrane region" description="Helical" evidence="1">
    <location>
        <begin position="234"/>
        <end position="254"/>
    </location>
</feature>